<protein>
    <recommendedName>
        <fullName>Nuclear envelope pore membrane protein POM 121C</fullName>
    </recommendedName>
    <alternativeName>
        <fullName>Nuclear pore membrane protein 121-2</fullName>
        <shortName>POM121-2</shortName>
    </alternativeName>
    <alternativeName>
        <fullName>Pore membrane protein of 121 kDa C</fullName>
    </alternativeName>
</protein>
<dbReference type="EMBL" id="AC006014">
    <property type="status" value="NOT_ANNOTATED_CDS"/>
    <property type="molecule type" value="Genomic_DNA"/>
</dbReference>
<dbReference type="EMBL" id="AC211429">
    <property type="status" value="NOT_ANNOTATED_CDS"/>
    <property type="molecule type" value="Genomic_DNA"/>
</dbReference>
<dbReference type="EMBL" id="BC082993">
    <property type="status" value="NOT_ANNOTATED_CDS"/>
    <property type="molecule type" value="mRNA"/>
</dbReference>
<dbReference type="EMBL" id="AB354586">
    <property type="protein sequence ID" value="BAF80888.1"/>
    <property type="molecule type" value="mRNA"/>
</dbReference>
<dbReference type="CCDS" id="CCDS47617.1">
    <molecule id="A8CG34-2"/>
</dbReference>
<dbReference type="PIR" id="T12551">
    <property type="entry name" value="T12551"/>
</dbReference>
<dbReference type="RefSeq" id="NP_001092885.2">
    <molecule id="A8CG34-2"/>
    <property type="nucleotide sequence ID" value="NM_001099415.3"/>
</dbReference>
<dbReference type="FunCoup" id="A8CG34">
    <property type="interactions" value="2554"/>
</dbReference>
<dbReference type="IntAct" id="A8CG34">
    <property type="interactions" value="24"/>
</dbReference>
<dbReference type="MINT" id="A8CG34"/>
<dbReference type="STRING" id="9606.ENSP00000481575"/>
<dbReference type="TCDB" id="1.I.1.1.3">
    <property type="family name" value="the nuclear pore complex (npc) family"/>
</dbReference>
<dbReference type="GlyCosmos" id="A8CG34">
    <property type="glycosylation" value="30 sites, 2 glycans"/>
</dbReference>
<dbReference type="GlyGen" id="A8CG34">
    <property type="glycosylation" value="26 sites, 2 O-linked glycans (24 sites)"/>
</dbReference>
<dbReference type="iPTMnet" id="A8CG34"/>
<dbReference type="PhosphoSitePlus" id="A8CG34"/>
<dbReference type="SwissPalm" id="A8CG34"/>
<dbReference type="BioMuta" id="POM121C"/>
<dbReference type="jPOST" id="A8CG34"/>
<dbReference type="MassIVE" id="A8CG34"/>
<dbReference type="PaxDb" id="9606-ENSP00000481575"/>
<dbReference type="PeptideAtlas" id="A8CG34"/>
<dbReference type="ProteomicsDB" id="1822">
    <molecule id="A8CG34-1"/>
</dbReference>
<dbReference type="ProteomicsDB" id="1823">
    <molecule id="A8CG34-2"/>
</dbReference>
<dbReference type="Pumba" id="A8CG34"/>
<dbReference type="Antibodypedia" id="74341">
    <property type="antibodies" value="7 antibodies from 3 providers"/>
</dbReference>
<dbReference type="DNASU" id="100101267"/>
<dbReference type="Ensembl" id="ENST00000607367.5">
    <molecule id="A8CG34-1"/>
    <property type="protein sequence ID" value="ENSP00000476236.2"/>
    <property type="gene ID" value="ENSG00000272391.6"/>
</dbReference>
<dbReference type="Ensembl" id="ENST00000615331.5">
    <molecule id="A8CG34-2"/>
    <property type="protein sequence ID" value="ENSP00000481575.1"/>
    <property type="gene ID" value="ENSG00000272391.6"/>
</dbReference>
<dbReference type="MANE-Select" id="ENST00000615331.5">
    <molecule id="A8CG34-2"/>
    <property type="protein sequence ID" value="ENSP00000481575.1"/>
    <property type="RefSeq nucleotide sequence ID" value="NM_001099415.3"/>
    <property type="RefSeq protein sequence ID" value="NP_001092885.2"/>
</dbReference>
<dbReference type="AGR" id="HGNC:34005"/>
<dbReference type="GeneCards" id="POM121C"/>
<dbReference type="HGNC" id="HGNC:34005">
    <property type="gene designation" value="POM121C"/>
</dbReference>
<dbReference type="HPA" id="ENSG00000272391">
    <property type="expression patterns" value="Low tissue specificity"/>
</dbReference>
<dbReference type="MIM" id="615754">
    <property type="type" value="gene"/>
</dbReference>
<dbReference type="neXtProt" id="NX_A8CG34"/>
<dbReference type="OpenTargets" id="ENSG00000272391"/>
<dbReference type="VEuPathDB" id="HostDB:ENSG00000272391"/>
<dbReference type="eggNOG" id="ENOG502R5GW">
    <property type="taxonomic scope" value="Eukaryota"/>
</dbReference>
<dbReference type="GeneTree" id="ENSGT00940000153253"/>
<dbReference type="InParanoid" id="A8CG34"/>
<dbReference type="OMA" id="VCCIVCY"/>
<dbReference type="OrthoDB" id="6510268at2759"/>
<dbReference type="PAN-GO" id="A8CG34">
    <property type="GO annotations" value="5 GO annotations based on evolutionary models"/>
</dbReference>
<dbReference type="PhylomeDB" id="A8CG34"/>
<dbReference type="TreeFam" id="TF323517"/>
<dbReference type="PathwayCommons" id="A8CG34"/>
<dbReference type="Reactome" id="R-HSA-1169408">
    <property type="pathway name" value="ISG15 antiviral mechanism"/>
</dbReference>
<dbReference type="Reactome" id="R-HSA-159227">
    <property type="pathway name" value="Transport of the SLBP independent Mature mRNA"/>
</dbReference>
<dbReference type="Reactome" id="R-HSA-159230">
    <property type="pathway name" value="Transport of the SLBP Dependant Mature mRNA"/>
</dbReference>
<dbReference type="Reactome" id="R-HSA-159231">
    <property type="pathway name" value="Transport of Mature mRNA Derived from an Intronless Transcript"/>
</dbReference>
<dbReference type="Reactome" id="R-HSA-159236">
    <property type="pathway name" value="Transport of Mature mRNA derived from an Intron-Containing Transcript"/>
</dbReference>
<dbReference type="Reactome" id="R-HSA-165054">
    <property type="pathway name" value="Rev-mediated nuclear export of HIV RNA"/>
</dbReference>
<dbReference type="Reactome" id="R-HSA-168271">
    <property type="pathway name" value="Transport of Ribonucleoproteins into the Host Nucleus"/>
</dbReference>
<dbReference type="Reactome" id="R-HSA-168276">
    <property type="pathway name" value="NS1 Mediated Effects on Host Pathways"/>
</dbReference>
<dbReference type="Reactome" id="R-HSA-168325">
    <property type="pathway name" value="Viral Messenger RNA Synthesis"/>
</dbReference>
<dbReference type="Reactome" id="R-HSA-168333">
    <property type="pathway name" value="NEP/NS2 Interacts with the Cellular Export Machinery"/>
</dbReference>
<dbReference type="Reactome" id="R-HSA-170822">
    <property type="pathway name" value="Regulation of Glucokinase by Glucokinase Regulatory Protein"/>
</dbReference>
<dbReference type="Reactome" id="R-HSA-180746">
    <property type="pathway name" value="Nuclear import of Rev protein"/>
</dbReference>
<dbReference type="Reactome" id="R-HSA-180910">
    <property type="pathway name" value="Vpr-mediated nuclear import of PICs"/>
</dbReference>
<dbReference type="Reactome" id="R-HSA-191859">
    <property type="pathway name" value="snRNP Assembly"/>
</dbReference>
<dbReference type="Reactome" id="R-HSA-3108214">
    <property type="pathway name" value="SUMOylation of DNA damage response and repair proteins"/>
</dbReference>
<dbReference type="Reactome" id="R-HSA-3232142">
    <property type="pathway name" value="SUMOylation of ubiquitinylation proteins"/>
</dbReference>
<dbReference type="Reactome" id="R-HSA-3301854">
    <property type="pathway name" value="Nuclear Pore Complex (NPC) Disassembly"/>
</dbReference>
<dbReference type="Reactome" id="R-HSA-3371453">
    <property type="pathway name" value="Regulation of HSF1-mediated heat shock response"/>
</dbReference>
<dbReference type="Reactome" id="R-HSA-4085377">
    <property type="pathway name" value="SUMOylation of SUMOylation proteins"/>
</dbReference>
<dbReference type="Reactome" id="R-HSA-4551638">
    <property type="pathway name" value="SUMOylation of chromatin organization proteins"/>
</dbReference>
<dbReference type="Reactome" id="R-HSA-4570464">
    <property type="pathway name" value="SUMOylation of RNA binding proteins"/>
</dbReference>
<dbReference type="Reactome" id="R-HSA-4615885">
    <property type="pathway name" value="SUMOylation of DNA replication proteins"/>
</dbReference>
<dbReference type="Reactome" id="R-HSA-5578749">
    <property type="pathway name" value="Transcriptional regulation by small RNAs"/>
</dbReference>
<dbReference type="Reactome" id="R-HSA-5619107">
    <property type="pathway name" value="Defective TPR may confer susceptibility towards thyroid papillary carcinoma (TPC)"/>
</dbReference>
<dbReference type="Reactome" id="R-HSA-6784531">
    <property type="pathway name" value="tRNA processing in the nucleus"/>
</dbReference>
<dbReference type="Reactome" id="R-HSA-9609690">
    <property type="pathway name" value="HCMV Early Events"/>
</dbReference>
<dbReference type="Reactome" id="R-HSA-9610379">
    <property type="pathway name" value="HCMV Late Events"/>
</dbReference>
<dbReference type="Reactome" id="R-HSA-9705671">
    <property type="pathway name" value="SARS-CoV-2 activates/modulates innate and adaptive immune responses"/>
</dbReference>
<dbReference type="SignaLink" id="A8CG34"/>
<dbReference type="BioGRID-ORCS" id="100101267">
    <property type="hits" value="221 hits in 1058 CRISPR screens"/>
</dbReference>
<dbReference type="CD-CODE" id="D6A53B8E">
    <property type="entry name" value="Nuclear pore complex"/>
</dbReference>
<dbReference type="ChiTaRS" id="POM121C">
    <property type="organism name" value="human"/>
</dbReference>
<dbReference type="GenomeRNAi" id="100101267"/>
<dbReference type="Pharos" id="A8CG34">
    <property type="development level" value="Tdark"/>
</dbReference>
<dbReference type="PRO" id="PR:A8CG34"/>
<dbReference type="Proteomes" id="UP000005640">
    <property type="component" value="Chromosome 7"/>
</dbReference>
<dbReference type="RNAct" id="A8CG34">
    <property type="molecule type" value="protein"/>
</dbReference>
<dbReference type="Bgee" id="ENSG00000272391">
    <property type="expression patterns" value="Expressed in islet of Langerhans and 101 other cell types or tissues"/>
</dbReference>
<dbReference type="ExpressionAtlas" id="A8CG34">
    <property type="expression patterns" value="baseline and differential"/>
</dbReference>
<dbReference type="GO" id="GO:0005789">
    <property type="term" value="C:endoplasmic reticulum membrane"/>
    <property type="evidence" value="ECO:0007669"/>
    <property type="project" value="UniProtKB-SubCell"/>
</dbReference>
<dbReference type="GO" id="GO:0005635">
    <property type="term" value="C:nuclear envelope"/>
    <property type="evidence" value="ECO:0000304"/>
    <property type="project" value="Reactome"/>
</dbReference>
<dbReference type="GO" id="GO:0031965">
    <property type="term" value="C:nuclear membrane"/>
    <property type="evidence" value="ECO:0000314"/>
    <property type="project" value="HPA"/>
</dbReference>
<dbReference type="GO" id="GO:0005643">
    <property type="term" value="C:nuclear pore"/>
    <property type="evidence" value="ECO:0000318"/>
    <property type="project" value="GO_Central"/>
</dbReference>
<dbReference type="GO" id="GO:0005654">
    <property type="term" value="C:nucleoplasm"/>
    <property type="evidence" value="ECO:0000314"/>
    <property type="project" value="HPA"/>
</dbReference>
<dbReference type="GO" id="GO:0008139">
    <property type="term" value="F:nuclear localization sequence binding"/>
    <property type="evidence" value="ECO:0000318"/>
    <property type="project" value="GO_Central"/>
</dbReference>
<dbReference type="GO" id="GO:0017056">
    <property type="term" value="F:structural constituent of nuclear pore"/>
    <property type="evidence" value="ECO:0000318"/>
    <property type="project" value="GO_Central"/>
</dbReference>
<dbReference type="GO" id="GO:0051028">
    <property type="term" value="P:mRNA transport"/>
    <property type="evidence" value="ECO:0007669"/>
    <property type="project" value="UniProtKB-KW"/>
</dbReference>
<dbReference type="GO" id="GO:0006606">
    <property type="term" value="P:protein import into nucleus"/>
    <property type="evidence" value="ECO:0000318"/>
    <property type="project" value="GO_Central"/>
</dbReference>
<dbReference type="GO" id="GO:0006405">
    <property type="term" value="P:RNA export from nucleus"/>
    <property type="evidence" value="ECO:0000318"/>
    <property type="project" value="GO_Central"/>
</dbReference>
<dbReference type="InterPro" id="IPR026054">
    <property type="entry name" value="Nucleoporin"/>
</dbReference>
<dbReference type="PANTHER" id="PTHR23193:SF5">
    <property type="entry name" value="NUCLEAR ENVELOPE PORE MEMBRANE PROTEIN POM 121C-RELATED"/>
    <property type="match status" value="1"/>
</dbReference>
<dbReference type="PANTHER" id="PTHR23193">
    <property type="entry name" value="NUCLEAR PORE COMPLEX PROTEIN NUP"/>
    <property type="match status" value="1"/>
</dbReference>
<dbReference type="Pfam" id="PF15229">
    <property type="entry name" value="POM121"/>
    <property type="match status" value="1"/>
</dbReference>
<proteinExistence type="evidence at protein level"/>
<reference key="1">
    <citation type="journal article" date="2003" name="Nature">
        <title>The DNA sequence of human chromosome 7.</title>
        <authorList>
            <person name="Hillier L.W."/>
            <person name="Fulton R.S."/>
            <person name="Fulton L.A."/>
            <person name="Graves T.A."/>
            <person name="Pepin K.H."/>
            <person name="Wagner-McPherson C."/>
            <person name="Layman D."/>
            <person name="Maas J."/>
            <person name="Jaeger S."/>
            <person name="Walker R."/>
            <person name="Wylie K."/>
            <person name="Sekhon M."/>
            <person name="Becker M.C."/>
            <person name="O'Laughlin M.D."/>
            <person name="Schaller M.E."/>
            <person name="Fewell G.A."/>
            <person name="Delehaunty K.D."/>
            <person name="Miner T.L."/>
            <person name="Nash W.E."/>
            <person name="Cordes M."/>
            <person name="Du H."/>
            <person name="Sun H."/>
            <person name="Edwards J."/>
            <person name="Bradshaw-Cordum H."/>
            <person name="Ali J."/>
            <person name="Andrews S."/>
            <person name="Isak A."/>
            <person name="Vanbrunt A."/>
            <person name="Nguyen C."/>
            <person name="Du F."/>
            <person name="Lamar B."/>
            <person name="Courtney L."/>
            <person name="Kalicki J."/>
            <person name="Ozersky P."/>
            <person name="Bielicki L."/>
            <person name="Scott K."/>
            <person name="Holmes A."/>
            <person name="Harkins R."/>
            <person name="Harris A."/>
            <person name="Strong C.M."/>
            <person name="Hou S."/>
            <person name="Tomlinson C."/>
            <person name="Dauphin-Kohlberg S."/>
            <person name="Kozlowicz-Reilly A."/>
            <person name="Leonard S."/>
            <person name="Rohlfing T."/>
            <person name="Rock S.M."/>
            <person name="Tin-Wollam A.-M."/>
            <person name="Abbott A."/>
            <person name="Minx P."/>
            <person name="Maupin R."/>
            <person name="Strowmatt C."/>
            <person name="Latreille P."/>
            <person name="Miller N."/>
            <person name="Johnson D."/>
            <person name="Murray J."/>
            <person name="Woessner J.P."/>
            <person name="Wendl M.C."/>
            <person name="Yang S.-P."/>
            <person name="Schultz B.R."/>
            <person name="Wallis J.W."/>
            <person name="Spieth J."/>
            <person name="Bieri T.A."/>
            <person name="Nelson J.O."/>
            <person name="Berkowicz N."/>
            <person name="Wohldmann P.E."/>
            <person name="Cook L.L."/>
            <person name="Hickenbotham M.T."/>
            <person name="Eldred J."/>
            <person name="Williams D."/>
            <person name="Bedell J.A."/>
            <person name="Mardis E.R."/>
            <person name="Clifton S.W."/>
            <person name="Chissoe S.L."/>
            <person name="Marra M.A."/>
            <person name="Raymond C."/>
            <person name="Haugen E."/>
            <person name="Gillett W."/>
            <person name="Zhou Y."/>
            <person name="James R."/>
            <person name="Phelps K."/>
            <person name="Iadanoto S."/>
            <person name="Bubb K."/>
            <person name="Simms E."/>
            <person name="Levy R."/>
            <person name="Clendenning J."/>
            <person name="Kaul R."/>
            <person name="Kent W.J."/>
            <person name="Furey T.S."/>
            <person name="Baertsch R.A."/>
            <person name="Brent M.R."/>
            <person name="Keibler E."/>
            <person name="Flicek P."/>
            <person name="Bork P."/>
            <person name="Suyama M."/>
            <person name="Bailey J.A."/>
            <person name="Portnoy M.E."/>
            <person name="Torrents D."/>
            <person name="Chinwalla A.T."/>
            <person name="Gish W.R."/>
            <person name="Eddy S.R."/>
            <person name="McPherson J.D."/>
            <person name="Olson M.V."/>
            <person name="Eichler E.E."/>
            <person name="Green E.D."/>
            <person name="Waterston R.H."/>
            <person name="Wilson R.K."/>
        </authorList>
    </citation>
    <scope>NUCLEOTIDE SEQUENCE [LARGE SCALE GENOMIC DNA]</scope>
</reference>
<reference key="2">
    <citation type="journal article" date="2004" name="Genome Res.">
        <title>The status, quality, and expansion of the NIH full-length cDNA project: the Mammalian Gene Collection (MGC).</title>
        <authorList>
            <consortium name="The MGC Project Team"/>
        </authorList>
    </citation>
    <scope>NUCLEOTIDE SEQUENCE [LARGE SCALE MRNA] (ISOFORM 2)</scope>
    <source>
        <tissue>Leiomyosarcoma</tissue>
    </source>
</reference>
<reference key="3">
    <citation type="journal article" date="2007" name="FEBS Lett.">
        <title>Two distinct human POM121 genes: requirement for the formation of nuclear pore complexes.</title>
        <authorList>
            <person name="Funakoshi T."/>
            <person name="Maeshima K."/>
            <person name="Yahata K."/>
            <person name="Sugano S."/>
            <person name="Imamoto F."/>
            <person name="Imamoto N."/>
        </authorList>
    </citation>
    <scope>NUCLEOTIDE SEQUENCE [MRNA] OF 1-398</scope>
    <scope>IDENTIFICATION BY MASS SPECTROMETRY</scope>
    <scope>FUNCTION</scope>
    <scope>SUBCELLULAR LOCATION</scope>
    <source>
        <tissue>Cervix</tissue>
    </source>
</reference>
<reference key="4">
    <citation type="journal article" date="2006" name="Cell">
        <title>Global, in vivo, and site-specific phosphorylation dynamics in signaling networks.</title>
        <authorList>
            <person name="Olsen J.V."/>
            <person name="Blagoev B."/>
            <person name="Gnad F."/>
            <person name="Macek B."/>
            <person name="Kumar C."/>
            <person name="Mortensen P."/>
            <person name="Mann M."/>
        </authorList>
    </citation>
    <scope>IDENTIFICATION BY MASS SPECTROMETRY [LARGE SCALE ANALYSIS]</scope>
    <source>
        <tissue>Cervix carcinoma</tissue>
    </source>
</reference>
<reference key="5">
    <citation type="journal article" date="2008" name="Proc. Natl. Acad. Sci. U.S.A.">
        <title>A quantitative atlas of mitotic phosphorylation.</title>
        <authorList>
            <person name="Dephoure N."/>
            <person name="Zhou C."/>
            <person name="Villen J."/>
            <person name="Beausoleil S.A."/>
            <person name="Bakalarski C.E."/>
            <person name="Elledge S.J."/>
            <person name="Gygi S.P."/>
        </authorList>
    </citation>
    <scope>IDENTIFICATION BY MASS SPECTROMETRY [LARGE SCALE ANALYSIS]</scope>
    <source>
        <tissue>Cervix carcinoma</tissue>
    </source>
</reference>
<reference key="6">
    <citation type="journal article" date="2009" name="Sci. Signal.">
        <title>Quantitative phosphoproteomic analysis of T cell receptor signaling reveals system-wide modulation of protein-protein interactions.</title>
        <authorList>
            <person name="Mayya V."/>
            <person name="Lundgren D.H."/>
            <person name="Hwang S.-I."/>
            <person name="Rezaul K."/>
            <person name="Wu L."/>
            <person name="Eng J.K."/>
            <person name="Rodionov V."/>
            <person name="Han D.K."/>
        </authorList>
    </citation>
    <scope>PHOSPHORYLATION [LARGE SCALE ANALYSIS] AT SER-370</scope>
    <scope>IDENTIFICATION BY MASS SPECTROMETRY [LARGE SCALE ANALYSIS]</scope>
    <source>
        <tissue>Leukemic T-cell</tissue>
    </source>
</reference>
<reference key="7">
    <citation type="journal article" date="2010" name="Sci. Signal.">
        <title>Quantitative phosphoproteomics reveals widespread full phosphorylation site occupancy during mitosis.</title>
        <authorList>
            <person name="Olsen J.V."/>
            <person name="Vermeulen M."/>
            <person name="Santamaria A."/>
            <person name="Kumar C."/>
            <person name="Miller M.L."/>
            <person name="Jensen L.J."/>
            <person name="Gnad F."/>
            <person name="Cox J."/>
            <person name="Jensen T.S."/>
            <person name="Nigg E.A."/>
            <person name="Brunak S."/>
            <person name="Mann M."/>
        </authorList>
    </citation>
    <scope>IDENTIFICATION BY MASS SPECTROMETRY [LARGE SCALE ANALYSIS]</scope>
    <source>
        <tissue>Cervix carcinoma</tissue>
    </source>
</reference>
<reference key="8">
    <citation type="journal article" date="2011" name="Sci. Signal.">
        <title>System-wide temporal characterization of the proteome and phosphoproteome of human embryonic stem cell differentiation.</title>
        <authorList>
            <person name="Rigbolt K.T."/>
            <person name="Prokhorova T.A."/>
            <person name="Akimov V."/>
            <person name="Henningsen J."/>
            <person name="Johansen P.T."/>
            <person name="Kratchmarova I."/>
            <person name="Kassem M."/>
            <person name="Mann M."/>
            <person name="Olsen J.V."/>
            <person name="Blagoev B."/>
        </authorList>
    </citation>
    <scope>PHOSPHORYLATION [LARGE SCALE ANALYSIS] AT SER-322 AND SER-348</scope>
    <scope>IDENTIFICATION BY MASS SPECTROMETRY [LARGE SCALE ANALYSIS]</scope>
</reference>
<reference key="9">
    <citation type="journal article" date="2013" name="J. Proteome Res.">
        <title>Toward a comprehensive characterization of a human cancer cell phosphoproteome.</title>
        <authorList>
            <person name="Zhou H."/>
            <person name="Di Palma S."/>
            <person name="Preisinger C."/>
            <person name="Peng M."/>
            <person name="Polat A.N."/>
            <person name="Heck A.J."/>
            <person name="Mohammed S."/>
        </authorList>
    </citation>
    <scope>PHOSPHORYLATION [LARGE SCALE ANALYSIS] AT SER-81 AND SER-373</scope>
    <scope>IDENTIFICATION BY MASS SPECTROMETRY [LARGE SCALE ANALYSIS]</scope>
    <source>
        <tissue>Cervix carcinoma</tissue>
        <tissue>Erythroleukemia</tissue>
    </source>
</reference>
<gene>
    <name type="primary">POM121C</name>
</gene>
<keyword id="KW-0025">Alternative splicing</keyword>
<keyword id="KW-0256">Endoplasmic reticulum</keyword>
<keyword id="KW-0472">Membrane</keyword>
<keyword id="KW-0509">mRNA transport</keyword>
<keyword id="KW-0906">Nuclear pore complex</keyword>
<keyword id="KW-0539">Nucleus</keyword>
<keyword id="KW-0597">Phosphoprotein</keyword>
<keyword id="KW-0653">Protein transport</keyword>
<keyword id="KW-1267">Proteomics identification</keyword>
<keyword id="KW-1185">Reference proteome</keyword>
<keyword id="KW-0677">Repeat</keyword>
<keyword id="KW-0811">Translocation</keyword>
<keyword id="KW-0812">Transmembrane</keyword>
<keyword id="KW-1133">Transmembrane helix</keyword>
<keyword id="KW-0813">Transport</keyword>
<comment type="function">
    <text evidence="5">Essential component of the nuclear pore complex (NPC). The repeat-containing domain may be involved in anchoring components of the pore complex to the pore membrane. When overexpressed in cells induces the formation of cytoplasmic annulate lamellae (AL).</text>
</comment>
<comment type="subcellular location">
    <subcellularLocation>
        <location evidence="5">Nucleus</location>
        <location evidence="5">Nuclear pore complex</location>
    </subcellularLocation>
    <subcellularLocation>
        <location evidence="5">Nucleus membrane</location>
        <topology evidence="5">Single-pass membrane protein</topology>
    </subcellularLocation>
    <subcellularLocation>
        <location evidence="1">Endoplasmic reticulum membrane</location>
        <topology evidence="1">Single-pass membrane protein</topology>
    </subcellularLocation>
    <text evidence="1">Stably associated with the NPC throughout interphase and the endoplasmic reticulum during metaphase.</text>
</comment>
<comment type="alternative products">
    <event type="alternative splicing"/>
    <isoform>
        <id>A8CG34-1</id>
        <name>1</name>
        <sequence type="displayed"/>
    </isoform>
    <isoform>
        <id>A8CG34-2</id>
        <name>2</name>
        <sequence type="described" ref="VSP_040759"/>
    </isoform>
</comment>
<comment type="domain">
    <text>Contains F-X-F-G repeats.</text>
</comment>
<comment type="similarity">
    <text evidence="7">Belongs to the POM121 family.</text>
</comment>
<accession>A8CG34</accession>
<accession>A0A075B7F8</accession>
<accession>A0A087WY75</accession>
<accession>O75115</accession>
<accession>Q9Y2N3</accession>
<accession>Q9Y4S7</accession>
<evidence type="ECO:0000250" key="1"/>
<evidence type="ECO:0000250" key="2">
    <source>
        <dbReference type="UniProtKB" id="Q96HA1"/>
    </source>
</evidence>
<evidence type="ECO:0000255" key="3"/>
<evidence type="ECO:0000256" key="4">
    <source>
        <dbReference type="SAM" id="MobiDB-lite"/>
    </source>
</evidence>
<evidence type="ECO:0000269" key="5">
    <source>
    </source>
</evidence>
<evidence type="ECO:0000303" key="6">
    <source>
    </source>
</evidence>
<evidence type="ECO:0000305" key="7"/>
<evidence type="ECO:0007744" key="8">
    <source>
    </source>
</evidence>
<evidence type="ECO:0007744" key="9">
    <source>
    </source>
</evidence>
<evidence type="ECO:0007744" key="10">
    <source>
    </source>
</evidence>
<sequence length="1229" mass="125092">MSPAAAAAGAGERRRPIASVRDGRGRGCGGPAGAALLGLSLVGLLLYLVPAAAALAWLAVGTTAAWWGLSREPRGSRPLSSFVQKARHRRTLFASPPAKSTANGNLLEPRTLLEGPDPAELLLMGSYLGKPGPPQPAPAPEGQDLRNRPGRRPPARPAPRSTPPSQPTHRVHHFYPSLPTPLLRPSGRPSPRDRGTLPDRFVITPRRRYPIHQTQYSCPGVLPTVCWNGYHKKAVLSPRNSRMVCSPVTVRIAPPDRRFSRSAIPEQIISSTLSSPSSNAPDPCAKETVLSALKEKKKKRTVEEEDQIFLDGQENKRRRHDSSGSGHSAFEPLVASGVPASFVPKPGSLKRGLNSQSSDDHLNKRSRSSSMSSLTGAYTSGIPSSSRNAITSSYSSTRGISQLWKRNGPSSSPFSSPASSRSQTPERPAKKIREEELCHHSSSSTPLAADKESQGEKAADTTPRKKQNSNSQSTPGSSGQRKRKVQLLPSRRGEQLTLPPPPQLGYSITAEDLDLEKKASLQWFNQALEDKSDAASNSVTETPPTTQPSFTFTLPAAATASPPTSLLAPSTNPLLESLKKMQTPPSLPPCPESAGAATTEALSPPKTPSLLPPLGLSQSGPPGLLPSPSFDSKPPTTLLGLIPAPSMVPATDTKAPPTLQAETATKPQATSAPSPAPKQSFLFGTQNTSPSSPAAPAASSASPMFKPIFTAPPKSEKEGLTPPGPSVSATAPSSSSLPTTTSTTAPTFQPVFSSMGPPASVPLPAPFFKQTTTPATAPTTTAPLFTGLASATSAVAPITSASPSTDSASKPAFGFGINSVSSSSVSTTTSTATAASQPFLFGAPQASAASFTPAMGSIFQFGKPPALPTTTTVTTFSQSLPTAVPTATSSSAADFSGFGSTLATSAPATSSQPTLTFSNTSTPTFNIPFGSSAKSPLPSYPGANPQPAFGAAEGQPPGAAKPALTPSFGSSFTFGNSAAPAPATAPTPAPASTIKIVPAHVPTPIQPTFGGATHSAFGLKATASAFGAPASSQPAFGGSTAVFSFGAATSSGFGATTQTASSGSSSSVFGSTTPSPFTFGGSAAPAGSGSFGINVATPGSSATTGAFSFGAGQSGSTATSTPFTGGLGQNALGTTGQSTPFAFNVGSTTESKPVFGGTATPTFGQNTPAPGVGTSGSSLSFGASSAPAQGFVGVGPFGSAAPSFSIGAGSKTPGARQRLQARRQHTRKK</sequence>
<feature type="chain" id="PRO_0000204906" description="Nuclear envelope pore membrane protein POM 121C">
    <location>
        <begin position="1"/>
        <end position="1229"/>
    </location>
</feature>
<feature type="transmembrane region" description="Helical" evidence="3">
    <location>
        <begin position="41"/>
        <end position="61"/>
    </location>
</feature>
<feature type="region of interest" description="Required for targeting to the nucleus and nuclear pore complex">
    <location>
        <begin position="1"/>
        <end position="398"/>
    </location>
</feature>
<feature type="region of interest" description="Cisternal side" evidence="3">
    <location>
        <begin position="1"/>
        <end position="40"/>
    </location>
</feature>
<feature type="region of interest" description="Disordered" evidence="4">
    <location>
        <begin position="1"/>
        <end position="24"/>
    </location>
</feature>
<feature type="region of interest" description="Pore side" evidence="3">
    <location>
        <begin position="62"/>
        <end position="1229"/>
    </location>
</feature>
<feature type="region of interest" description="Disordered" evidence="4">
    <location>
        <begin position="90"/>
        <end position="200"/>
    </location>
</feature>
<feature type="region of interest" description="Disordered" evidence="4">
    <location>
        <begin position="296"/>
        <end position="507"/>
    </location>
</feature>
<feature type="region of interest" description="Disordered" evidence="4">
    <location>
        <begin position="579"/>
        <end position="747"/>
    </location>
</feature>
<feature type="region of interest" description="Disordered" evidence="4">
    <location>
        <begin position="936"/>
        <end position="966"/>
    </location>
</feature>
<feature type="region of interest" description="Disordered" evidence="4">
    <location>
        <begin position="1202"/>
        <end position="1229"/>
    </location>
</feature>
<feature type="compositionally biased region" description="Low complexity" evidence="4">
    <location>
        <begin position="1"/>
        <end position="10"/>
    </location>
</feature>
<feature type="compositionally biased region" description="Basic and acidic residues" evidence="4">
    <location>
        <begin position="11"/>
        <end position="24"/>
    </location>
</feature>
<feature type="compositionally biased region" description="Pro residues" evidence="4">
    <location>
        <begin position="155"/>
        <end position="166"/>
    </location>
</feature>
<feature type="compositionally biased region" description="Low complexity" evidence="4">
    <location>
        <begin position="176"/>
        <end position="189"/>
    </location>
</feature>
<feature type="compositionally biased region" description="Polar residues" evidence="4">
    <location>
        <begin position="374"/>
        <end position="400"/>
    </location>
</feature>
<feature type="compositionally biased region" description="Low complexity" evidence="4">
    <location>
        <begin position="409"/>
        <end position="422"/>
    </location>
</feature>
<feature type="compositionally biased region" description="Basic and acidic residues" evidence="4">
    <location>
        <begin position="427"/>
        <end position="439"/>
    </location>
</feature>
<feature type="compositionally biased region" description="Basic and acidic residues" evidence="4">
    <location>
        <begin position="449"/>
        <end position="463"/>
    </location>
</feature>
<feature type="compositionally biased region" description="Polar residues" evidence="4">
    <location>
        <begin position="468"/>
        <end position="479"/>
    </location>
</feature>
<feature type="compositionally biased region" description="Low complexity" evidence="4">
    <location>
        <begin position="612"/>
        <end position="629"/>
    </location>
</feature>
<feature type="compositionally biased region" description="Polar residues" evidence="4">
    <location>
        <begin position="660"/>
        <end position="673"/>
    </location>
</feature>
<feature type="compositionally biased region" description="Low complexity" evidence="4">
    <location>
        <begin position="689"/>
        <end position="703"/>
    </location>
</feature>
<feature type="compositionally biased region" description="Low complexity" evidence="4">
    <location>
        <begin position="726"/>
        <end position="747"/>
    </location>
</feature>
<feature type="compositionally biased region" description="Basic residues" evidence="4">
    <location>
        <begin position="1219"/>
        <end position="1229"/>
    </location>
</feature>
<feature type="modified residue" description="Phosphoserine" evidence="10">
    <location>
        <position position="81"/>
    </location>
</feature>
<feature type="modified residue" description="Phosphoserine" evidence="9">
    <location>
        <position position="322"/>
    </location>
</feature>
<feature type="modified residue" description="Phosphoserine" evidence="2">
    <location>
        <position position="328"/>
    </location>
</feature>
<feature type="modified residue" description="Phosphoserine" evidence="9">
    <location>
        <position position="348"/>
    </location>
</feature>
<feature type="modified residue" description="Phosphoserine" evidence="8">
    <location>
        <position position="370"/>
    </location>
</feature>
<feature type="modified residue" description="Phosphoserine" evidence="10">
    <location>
        <position position="373"/>
    </location>
</feature>
<feature type="splice variant" id="VSP_040759" description="In isoform 2." evidence="6">
    <location>
        <begin position="1"/>
        <end position="242"/>
    </location>
</feature>
<feature type="sequence variant" id="VAR_045906" description="In dbSNP:rs427206.">
    <original>T</original>
    <variation>A</variation>
    <location>
        <position position="379"/>
    </location>
</feature>
<feature type="sequence variant" id="VAR_045907" description="In dbSNP:rs365436.">
    <original>Q</original>
    <variation>L</variation>
    <location>
        <position position="1165"/>
    </location>
</feature>
<feature type="sequence conflict" description="In Ref. 3; BAF80888." evidence="7" ref="3">
    <original>Q</original>
    <variation>P</variation>
    <location>
        <position position="166"/>
    </location>
</feature>
<feature type="sequence conflict" description="In Ref. 2; BC082993." evidence="7" ref="2">
    <original>T</original>
    <variation>A</variation>
    <location>
        <position position="965"/>
    </location>
</feature>
<feature type="sequence conflict" description="In Ref. 2; BC082993." evidence="7" ref="2">
    <location>
        <begin position="979"/>
        <end position="980"/>
    </location>
</feature>
<feature type="sequence conflict" description="In Ref. 2; BC082993." evidence="7" ref="2">
    <original>T</original>
    <variation>A</variation>
    <location>
        <position position="984"/>
    </location>
</feature>
<feature type="sequence conflict" description="In Ref. 2; BC082993." evidence="7" ref="2">
    <original>A</original>
    <variation>P</variation>
    <location>
        <position position="991"/>
    </location>
</feature>
<feature type="sequence conflict" description="In Ref. 2; BC082993." evidence="7" ref="2">
    <original>A</original>
    <variation>T</variation>
    <location>
        <position position="1025"/>
    </location>
</feature>
<organism>
    <name type="scientific">Homo sapiens</name>
    <name type="common">Human</name>
    <dbReference type="NCBI Taxonomy" id="9606"/>
    <lineage>
        <taxon>Eukaryota</taxon>
        <taxon>Metazoa</taxon>
        <taxon>Chordata</taxon>
        <taxon>Craniata</taxon>
        <taxon>Vertebrata</taxon>
        <taxon>Euteleostomi</taxon>
        <taxon>Mammalia</taxon>
        <taxon>Eutheria</taxon>
        <taxon>Euarchontoglires</taxon>
        <taxon>Primates</taxon>
        <taxon>Haplorrhini</taxon>
        <taxon>Catarrhini</taxon>
        <taxon>Hominidae</taxon>
        <taxon>Homo</taxon>
    </lineage>
</organism>
<name>P121C_HUMAN</name>